<accession>Q8RWE9</accession>
<accession>Q9FGR4</accession>
<name>NAT5_ARATH</name>
<gene>
    <name type="primary">NAT5</name>
    <name type="ordered locus">At5g49990</name>
    <name type="ORF">K9P8.13</name>
</gene>
<organism>
    <name type="scientific">Arabidopsis thaliana</name>
    <name type="common">Mouse-ear cress</name>
    <dbReference type="NCBI Taxonomy" id="3702"/>
    <lineage>
        <taxon>Eukaryota</taxon>
        <taxon>Viridiplantae</taxon>
        <taxon>Streptophyta</taxon>
        <taxon>Embryophyta</taxon>
        <taxon>Tracheophyta</taxon>
        <taxon>Spermatophyta</taxon>
        <taxon>Magnoliopsida</taxon>
        <taxon>eudicotyledons</taxon>
        <taxon>Gunneridae</taxon>
        <taxon>Pentapetalae</taxon>
        <taxon>rosids</taxon>
        <taxon>malvids</taxon>
        <taxon>Brassicales</taxon>
        <taxon>Brassicaceae</taxon>
        <taxon>Camelineae</taxon>
        <taxon>Arabidopsis</taxon>
    </lineage>
</organism>
<protein>
    <recommendedName>
        <fullName>Nucleobase-ascorbate transporter 5</fullName>
        <shortName>AtNAT5</shortName>
    </recommendedName>
</protein>
<proteinExistence type="evidence at transcript level"/>
<evidence type="ECO:0000255" key="1"/>
<evidence type="ECO:0000256" key="2">
    <source>
        <dbReference type="SAM" id="MobiDB-lite"/>
    </source>
</evidence>
<evidence type="ECO:0000269" key="3">
    <source>
    </source>
</evidence>
<evidence type="ECO:0000305" key="4"/>
<comment type="subcellular location">
    <subcellularLocation>
        <location evidence="4">Membrane</location>
        <topology evidence="4">Multi-pass membrane protein</topology>
    </subcellularLocation>
</comment>
<comment type="tissue specificity">
    <text evidence="3">Weakly expressed in the vasculature of developing leaves.</text>
</comment>
<comment type="similarity">
    <text evidence="4">Belongs to the nucleobase:cation symporter-2 (NCS2) (TC 2.A.40) family.</text>
</comment>
<feature type="chain" id="PRO_0000270162" description="Nucleobase-ascorbate transporter 5">
    <location>
        <begin position="1"/>
        <end position="528"/>
    </location>
</feature>
<feature type="transmembrane region" description="Helical" evidence="1">
    <location>
        <begin position="35"/>
        <end position="55"/>
    </location>
</feature>
<feature type="transmembrane region" description="Helical" evidence="1">
    <location>
        <begin position="71"/>
        <end position="91"/>
    </location>
</feature>
<feature type="transmembrane region" description="Helical" evidence="1">
    <location>
        <begin position="93"/>
        <end position="113"/>
    </location>
</feature>
<feature type="transmembrane region" description="Helical" evidence="1">
    <location>
        <begin position="133"/>
        <end position="153"/>
    </location>
</feature>
<feature type="transmembrane region" description="Helical" evidence="1">
    <location>
        <begin position="159"/>
        <end position="179"/>
    </location>
</feature>
<feature type="transmembrane region" description="Helical" evidence="1">
    <location>
        <begin position="181"/>
        <end position="201"/>
    </location>
</feature>
<feature type="transmembrane region" description="Helical" evidence="1">
    <location>
        <begin position="219"/>
        <end position="239"/>
    </location>
</feature>
<feature type="transmembrane region" description="Helical" evidence="1">
    <location>
        <begin position="285"/>
        <end position="305"/>
    </location>
</feature>
<feature type="transmembrane region" description="Helical" evidence="1">
    <location>
        <begin position="367"/>
        <end position="387"/>
    </location>
</feature>
<feature type="transmembrane region" description="Helical" evidence="1">
    <location>
        <begin position="390"/>
        <end position="410"/>
    </location>
</feature>
<feature type="transmembrane region" description="Helical" evidence="1">
    <location>
        <begin position="418"/>
        <end position="438"/>
    </location>
</feature>
<feature type="transmembrane region" description="Helical" evidence="1">
    <location>
        <begin position="460"/>
        <end position="479"/>
    </location>
</feature>
<feature type="region of interest" description="Disordered" evidence="2">
    <location>
        <begin position="1"/>
        <end position="20"/>
    </location>
</feature>
<dbReference type="EMBL" id="AB024032">
    <property type="protein sequence ID" value="BAB08803.1"/>
    <property type="molecule type" value="Genomic_DNA"/>
</dbReference>
<dbReference type="EMBL" id="AB026650">
    <property type="status" value="NOT_ANNOTATED_CDS"/>
    <property type="molecule type" value="Genomic_DNA"/>
</dbReference>
<dbReference type="EMBL" id="CP002688">
    <property type="protein sequence ID" value="AED95881.1"/>
    <property type="molecule type" value="Genomic_DNA"/>
</dbReference>
<dbReference type="EMBL" id="CP002688">
    <property type="protein sequence ID" value="ANM69095.1"/>
    <property type="molecule type" value="Genomic_DNA"/>
</dbReference>
<dbReference type="EMBL" id="CP002688">
    <property type="protein sequence ID" value="ANM69096.1"/>
    <property type="molecule type" value="Genomic_DNA"/>
</dbReference>
<dbReference type="EMBL" id="CP002688">
    <property type="protein sequence ID" value="ANM69097.1"/>
    <property type="molecule type" value="Genomic_DNA"/>
</dbReference>
<dbReference type="EMBL" id="AY093137">
    <property type="protein sequence ID" value="AAM13136.1"/>
    <property type="molecule type" value="mRNA"/>
</dbReference>
<dbReference type="EMBL" id="BT008887">
    <property type="protein sequence ID" value="AAP68326.1"/>
    <property type="molecule type" value="mRNA"/>
</dbReference>
<dbReference type="EMBL" id="AK229752">
    <property type="protein sequence ID" value="BAF01588.1"/>
    <property type="molecule type" value="mRNA"/>
</dbReference>
<dbReference type="RefSeq" id="NP_001330797.1">
    <property type="nucleotide sequence ID" value="NM_001344866.1"/>
</dbReference>
<dbReference type="RefSeq" id="NP_001330798.1">
    <property type="nucleotide sequence ID" value="NM_001344868.1"/>
</dbReference>
<dbReference type="RefSeq" id="NP_001330799.1">
    <property type="nucleotide sequence ID" value="NM_001344867.1"/>
</dbReference>
<dbReference type="RefSeq" id="NP_199810.2">
    <property type="nucleotide sequence ID" value="NM_124378.6"/>
</dbReference>
<dbReference type="SMR" id="Q8RWE9"/>
<dbReference type="BioGRID" id="20309">
    <property type="interactions" value="6"/>
</dbReference>
<dbReference type="FunCoup" id="Q8RWE9">
    <property type="interactions" value="822"/>
</dbReference>
<dbReference type="IntAct" id="Q8RWE9">
    <property type="interactions" value="6"/>
</dbReference>
<dbReference type="STRING" id="3702.Q8RWE9"/>
<dbReference type="PaxDb" id="3702-AT5G49990.1"/>
<dbReference type="ProteomicsDB" id="251050"/>
<dbReference type="EnsemblPlants" id="AT5G49990.1">
    <property type="protein sequence ID" value="AT5G49990.1"/>
    <property type="gene ID" value="AT5G49990"/>
</dbReference>
<dbReference type="EnsemblPlants" id="AT5G49990.2">
    <property type="protein sequence ID" value="AT5G49990.2"/>
    <property type="gene ID" value="AT5G49990"/>
</dbReference>
<dbReference type="EnsemblPlants" id="AT5G49990.3">
    <property type="protein sequence ID" value="AT5G49990.3"/>
    <property type="gene ID" value="AT5G49990"/>
</dbReference>
<dbReference type="EnsemblPlants" id="AT5G49990.4">
    <property type="protein sequence ID" value="AT5G49990.4"/>
    <property type="gene ID" value="AT5G49990"/>
</dbReference>
<dbReference type="GeneID" id="835063"/>
<dbReference type="Gramene" id="AT5G49990.1">
    <property type="protein sequence ID" value="AT5G49990.1"/>
    <property type="gene ID" value="AT5G49990"/>
</dbReference>
<dbReference type="Gramene" id="AT5G49990.2">
    <property type="protein sequence ID" value="AT5G49990.2"/>
    <property type="gene ID" value="AT5G49990"/>
</dbReference>
<dbReference type="Gramene" id="AT5G49990.3">
    <property type="protein sequence ID" value="AT5G49990.3"/>
    <property type="gene ID" value="AT5G49990"/>
</dbReference>
<dbReference type="Gramene" id="AT5G49990.4">
    <property type="protein sequence ID" value="AT5G49990.4"/>
    <property type="gene ID" value="AT5G49990"/>
</dbReference>
<dbReference type="KEGG" id="ath:AT5G49990"/>
<dbReference type="Araport" id="AT5G49990"/>
<dbReference type="TAIR" id="AT5G49990"/>
<dbReference type="eggNOG" id="KOG1292">
    <property type="taxonomic scope" value="Eukaryota"/>
</dbReference>
<dbReference type="HOGENOM" id="CLU_017959_5_3_1"/>
<dbReference type="InParanoid" id="Q8RWE9"/>
<dbReference type="OMA" id="FQWGAPL"/>
<dbReference type="OrthoDB" id="1641903at2759"/>
<dbReference type="PhylomeDB" id="Q8RWE9"/>
<dbReference type="PRO" id="PR:Q8RWE9"/>
<dbReference type="Proteomes" id="UP000006548">
    <property type="component" value="Chromosome 5"/>
</dbReference>
<dbReference type="ExpressionAtlas" id="Q8RWE9">
    <property type="expression patterns" value="baseline and differential"/>
</dbReference>
<dbReference type="GO" id="GO:0016020">
    <property type="term" value="C:membrane"/>
    <property type="evidence" value="ECO:0007669"/>
    <property type="project" value="UniProtKB-SubCell"/>
</dbReference>
<dbReference type="GO" id="GO:0009506">
    <property type="term" value="C:plasmodesma"/>
    <property type="evidence" value="ECO:0007005"/>
    <property type="project" value="TAIR"/>
</dbReference>
<dbReference type="GO" id="GO:0022857">
    <property type="term" value="F:transmembrane transporter activity"/>
    <property type="evidence" value="ECO:0007669"/>
    <property type="project" value="InterPro"/>
</dbReference>
<dbReference type="InterPro" id="IPR006043">
    <property type="entry name" value="NCS2"/>
</dbReference>
<dbReference type="NCBIfam" id="NF037981">
    <property type="entry name" value="NCS2_1"/>
    <property type="match status" value="1"/>
</dbReference>
<dbReference type="PANTHER" id="PTHR11119">
    <property type="entry name" value="XANTHINE-URACIL / VITAMIN C PERMEASE FAMILY MEMBER"/>
    <property type="match status" value="1"/>
</dbReference>
<dbReference type="Pfam" id="PF00860">
    <property type="entry name" value="Xan_ur_permease"/>
    <property type="match status" value="1"/>
</dbReference>
<sequence length="528" mass="57321">MSAPKSGGDPLPHPPKEQLPDISYCITSPPPWPEAVLLGFQHYLVMLGTTVLIPSALVPQMGGRNEEKAKLIQTILFVAGLNTLLQTVFGTRLPAVIGASYTFVPVTISIMLSGRFNDVADPVERFKRIIRATQGALIVASTLQIILGFSGLWRNVVRFLSPLSAAPLVGLVGYGLYELGFPGVAKCIEIGLPGLIILILISQYMPHVIKGGKHVFARFAVIFSVAIVWLYAFFLTLGGAYNGVGTDTQRSCRTDRAGLISAAPWIRVPWPFQWGAPLFDAGEAFAMMMASFVALVESTGAFIAVSRYASATMPPPSVISRGVGWQGVAILISGLFGTGIGSSVSVENAGLLALTKIGSRRVVQISAGFMIFFSILGKFGAVFASIPSPIIAALYCLFFAYVGAGGLSLLQFCNLNSFRTLFILGFSIFLGLSIPQYFNEHTAIKGYGPVHTGARWFNDMVNVPFSSKAFVGGCVAYLLDTTLHKKDGSIRKDRGKHWWDRFWTFKNDPRTEEFYALPFNLNKYFPSV</sequence>
<reference key="1">
    <citation type="journal article" date="2000" name="DNA Res.">
        <title>Structural analysis of Arabidopsis thaliana chromosome 5. X. Sequence features of the regions of 3,076,755 bp covered by sixty P1 and TAC clones.</title>
        <authorList>
            <person name="Sato S."/>
            <person name="Nakamura Y."/>
            <person name="Kaneko T."/>
            <person name="Katoh T."/>
            <person name="Asamizu E."/>
            <person name="Kotani H."/>
            <person name="Tabata S."/>
        </authorList>
    </citation>
    <scope>NUCLEOTIDE SEQUENCE [LARGE SCALE GENOMIC DNA]</scope>
    <source>
        <strain>cv. Columbia</strain>
    </source>
</reference>
<reference key="2">
    <citation type="submission" date="1999-05" db="EMBL/GenBank/DDBJ databases">
        <title>Structural analysis of Arabidopsis thaliana chromosome 5. XI.</title>
        <authorList>
            <person name="Kaneko T."/>
            <person name="Katoh T."/>
            <person name="Asamizu E."/>
            <person name="Sato S."/>
            <person name="Nakamura Y."/>
            <person name="Kotani H."/>
            <person name="Tabata S."/>
        </authorList>
    </citation>
    <scope>NUCLEOTIDE SEQUENCE [LARGE SCALE GENOMIC DNA]</scope>
    <source>
        <strain>cv. Columbia</strain>
    </source>
</reference>
<reference key="3">
    <citation type="journal article" date="2017" name="Plant J.">
        <title>Araport11: a complete reannotation of the Arabidopsis thaliana reference genome.</title>
        <authorList>
            <person name="Cheng C.Y."/>
            <person name="Krishnakumar V."/>
            <person name="Chan A.P."/>
            <person name="Thibaud-Nissen F."/>
            <person name="Schobel S."/>
            <person name="Town C.D."/>
        </authorList>
    </citation>
    <scope>GENOME REANNOTATION</scope>
    <source>
        <strain>cv. Columbia</strain>
    </source>
</reference>
<reference key="4">
    <citation type="journal article" date="2003" name="Science">
        <title>Empirical analysis of transcriptional activity in the Arabidopsis genome.</title>
        <authorList>
            <person name="Yamada K."/>
            <person name="Lim J."/>
            <person name="Dale J.M."/>
            <person name="Chen H."/>
            <person name="Shinn P."/>
            <person name="Palm C.J."/>
            <person name="Southwick A.M."/>
            <person name="Wu H.C."/>
            <person name="Kim C.J."/>
            <person name="Nguyen M."/>
            <person name="Pham P.K."/>
            <person name="Cheuk R.F."/>
            <person name="Karlin-Newmann G."/>
            <person name="Liu S.X."/>
            <person name="Lam B."/>
            <person name="Sakano H."/>
            <person name="Wu T."/>
            <person name="Yu G."/>
            <person name="Miranda M."/>
            <person name="Quach H.L."/>
            <person name="Tripp M."/>
            <person name="Chang C.H."/>
            <person name="Lee J.M."/>
            <person name="Toriumi M.J."/>
            <person name="Chan M.M."/>
            <person name="Tang C.C."/>
            <person name="Onodera C.S."/>
            <person name="Deng J.M."/>
            <person name="Akiyama K."/>
            <person name="Ansari Y."/>
            <person name="Arakawa T."/>
            <person name="Banh J."/>
            <person name="Banno F."/>
            <person name="Bowser L."/>
            <person name="Brooks S.Y."/>
            <person name="Carninci P."/>
            <person name="Chao Q."/>
            <person name="Choy N."/>
            <person name="Enju A."/>
            <person name="Goldsmith A.D."/>
            <person name="Gurjal M."/>
            <person name="Hansen N.F."/>
            <person name="Hayashizaki Y."/>
            <person name="Johnson-Hopson C."/>
            <person name="Hsuan V.W."/>
            <person name="Iida K."/>
            <person name="Karnes M."/>
            <person name="Khan S."/>
            <person name="Koesema E."/>
            <person name="Ishida J."/>
            <person name="Jiang P.X."/>
            <person name="Jones T."/>
            <person name="Kawai J."/>
            <person name="Kamiya A."/>
            <person name="Meyers C."/>
            <person name="Nakajima M."/>
            <person name="Narusaka M."/>
            <person name="Seki M."/>
            <person name="Sakurai T."/>
            <person name="Satou M."/>
            <person name="Tamse R."/>
            <person name="Vaysberg M."/>
            <person name="Wallender E.K."/>
            <person name="Wong C."/>
            <person name="Yamamura Y."/>
            <person name="Yuan S."/>
            <person name="Shinozaki K."/>
            <person name="Davis R.W."/>
            <person name="Theologis A."/>
            <person name="Ecker J.R."/>
        </authorList>
    </citation>
    <scope>NUCLEOTIDE SEQUENCE [LARGE SCALE MRNA]</scope>
    <source>
        <strain>cv. Columbia</strain>
    </source>
</reference>
<reference key="5">
    <citation type="submission" date="2006-07" db="EMBL/GenBank/DDBJ databases">
        <title>Large-scale analysis of RIKEN Arabidopsis full-length (RAFL) cDNAs.</title>
        <authorList>
            <person name="Totoki Y."/>
            <person name="Seki M."/>
            <person name="Ishida J."/>
            <person name="Nakajima M."/>
            <person name="Enju A."/>
            <person name="Kamiya A."/>
            <person name="Narusaka M."/>
            <person name="Shin-i T."/>
            <person name="Nakagawa M."/>
            <person name="Sakamoto N."/>
            <person name="Oishi K."/>
            <person name="Kohara Y."/>
            <person name="Kobayashi M."/>
            <person name="Toyoda A."/>
            <person name="Sakaki Y."/>
            <person name="Sakurai T."/>
            <person name="Iida K."/>
            <person name="Akiyama K."/>
            <person name="Satou M."/>
            <person name="Toyoda T."/>
            <person name="Konagaya A."/>
            <person name="Carninci P."/>
            <person name="Kawai J."/>
            <person name="Hayashizaki Y."/>
            <person name="Shinozaki K."/>
        </authorList>
    </citation>
    <scope>NUCLEOTIDE SEQUENCE [LARGE SCALE MRNA]</scope>
    <source>
        <strain>cv. Columbia</strain>
    </source>
</reference>
<reference key="6">
    <citation type="journal article" date="2006" name="Plant Cell Physiol.">
        <title>Identification and expression analysis of twelve members of the nucleobase-ascorbate transporter (NAT) gene family in Arabidopsis thaliana.</title>
        <authorList>
            <person name="Maurino V.G."/>
            <person name="Grube E."/>
            <person name="Zielinski J."/>
            <person name="Schild A."/>
            <person name="Fischer K."/>
            <person name="Flugge U.-I."/>
        </authorList>
    </citation>
    <scope>GENE FAMILY</scope>
    <scope>TISSUE SPECIFICITY</scope>
</reference>
<keyword id="KW-0472">Membrane</keyword>
<keyword id="KW-1185">Reference proteome</keyword>
<keyword id="KW-0812">Transmembrane</keyword>
<keyword id="KW-1133">Transmembrane helix</keyword>
<keyword id="KW-0813">Transport</keyword>